<feature type="chain" id="PRO_0000057427" description="tRNA pseudouridine synthase A">
    <location>
        <begin position="1"/>
        <end position="264"/>
    </location>
</feature>
<feature type="active site" description="Nucleophile" evidence="1">
    <location>
        <position position="51"/>
    </location>
</feature>
<feature type="binding site" evidence="1">
    <location>
        <position position="109"/>
    </location>
    <ligand>
        <name>substrate</name>
    </ligand>
</feature>
<proteinExistence type="inferred from homology"/>
<sequence>MKIALGIQYNGKNYCGWQRQENVASVQEQLEKAISFVANQPCQIFCAGRTDSGVHATGQVVHFETDAIRAEKAWSFGVNANLPDDISVSWAKCVTDDFHARFSATARRYRYILYCNKLRSAILPEGVTHCHLDLDHHLMHQAGQALLGEQDFSSFRAAQCQSHTPFRNVHHLKVVRRGQYIIVDIQANAFVHHMVRNIVGSLIEVGAGHQPVEWIGWLLAQKDRRLAAPTAKPEGLYLVNVSYPTQFQLPQNALGPLFLENELG</sequence>
<organism>
    <name type="scientific">Pasteurella multocida (strain Pm70)</name>
    <dbReference type="NCBI Taxonomy" id="272843"/>
    <lineage>
        <taxon>Bacteria</taxon>
        <taxon>Pseudomonadati</taxon>
        <taxon>Pseudomonadota</taxon>
        <taxon>Gammaproteobacteria</taxon>
        <taxon>Pasteurellales</taxon>
        <taxon>Pasteurellaceae</taxon>
        <taxon>Pasteurella</taxon>
    </lineage>
</organism>
<reference key="1">
    <citation type="journal article" date="2001" name="Proc. Natl. Acad. Sci. U.S.A.">
        <title>Complete genomic sequence of Pasteurella multocida Pm70.</title>
        <authorList>
            <person name="May B.J."/>
            <person name="Zhang Q."/>
            <person name="Li L.L."/>
            <person name="Paustian M.L."/>
            <person name="Whittam T.S."/>
            <person name="Kapur V."/>
        </authorList>
    </citation>
    <scope>NUCLEOTIDE SEQUENCE [LARGE SCALE GENOMIC DNA]</scope>
    <source>
        <strain>Pm70</strain>
    </source>
</reference>
<accession>P57861</accession>
<evidence type="ECO:0000255" key="1">
    <source>
        <dbReference type="HAMAP-Rule" id="MF_00171"/>
    </source>
</evidence>
<keyword id="KW-0413">Isomerase</keyword>
<keyword id="KW-1185">Reference proteome</keyword>
<keyword id="KW-0819">tRNA processing</keyword>
<name>TRUA_PASMU</name>
<protein>
    <recommendedName>
        <fullName evidence="1">tRNA pseudouridine synthase A</fullName>
        <ecNumber evidence="1">5.4.99.12</ecNumber>
    </recommendedName>
    <alternativeName>
        <fullName evidence="1">tRNA pseudouridine(38-40) synthase</fullName>
    </alternativeName>
    <alternativeName>
        <fullName evidence="1">tRNA pseudouridylate synthase I</fullName>
    </alternativeName>
    <alternativeName>
        <fullName evidence="1">tRNA-uridine isomerase I</fullName>
    </alternativeName>
</protein>
<comment type="function">
    <text evidence="1">Formation of pseudouridine at positions 38, 39 and 40 in the anticodon stem and loop of transfer RNAs.</text>
</comment>
<comment type="catalytic activity">
    <reaction evidence="1">
        <text>uridine(38/39/40) in tRNA = pseudouridine(38/39/40) in tRNA</text>
        <dbReference type="Rhea" id="RHEA:22376"/>
        <dbReference type="Rhea" id="RHEA-COMP:10085"/>
        <dbReference type="Rhea" id="RHEA-COMP:10087"/>
        <dbReference type="ChEBI" id="CHEBI:65314"/>
        <dbReference type="ChEBI" id="CHEBI:65315"/>
        <dbReference type="EC" id="5.4.99.12"/>
    </reaction>
</comment>
<comment type="subunit">
    <text evidence="1">Homodimer.</text>
</comment>
<comment type="similarity">
    <text evidence="1">Belongs to the tRNA pseudouridine synthase TruA family.</text>
</comment>
<dbReference type="EC" id="5.4.99.12" evidence="1"/>
<dbReference type="EMBL" id="AE004439">
    <property type="protein sequence ID" value="AAK02721.1"/>
    <property type="molecule type" value="Genomic_DNA"/>
</dbReference>
<dbReference type="RefSeq" id="WP_005726499.1">
    <property type="nucleotide sequence ID" value="NC_002663.1"/>
</dbReference>
<dbReference type="SMR" id="P57861"/>
<dbReference type="STRING" id="272843.PM0637"/>
<dbReference type="EnsemblBacteria" id="AAK02721">
    <property type="protein sequence ID" value="AAK02721"/>
    <property type="gene ID" value="PM0637"/>
</dbReference>
<dbReference type="KEGG" id="pmu:PM0637"/>
<dbReference type="HOGENOM" id="CLU_014673_0_2_6"/>
<dbReference type="OrthoDB" id="9811823at2"/>
<dbReference type="Proteomes" id="UP000000809">
    <property type="component" value="Chromosome"/>
</dbReference>
<dbReference type="GO" id="GO:0003723">
    <property type="term" value="F:RNA binding"/>
    <property type="evidence" value="ECO:0007669"/>
    <property type="project" value="InterPro"/>
</dbReference>
<dbReference type="GO" id="GO:0160147">
    <property type="term" value="F:tRNA pseudouridine(38-40) synthase activity"/>
    <property type="evidence" value="ECO:0007669"/>
    <property type="project" value="UniProtKB-EC"/>
</dbReference>
<dbReference type="GO" id="GO:0031119">
    <property type="term" value="P:tRNA pseudouridine synthesis"/>
    <property type="evidence" value="ECO:0007669"/>
    <property type="project" value="UniProtKB-UniRule"/>
</dbReference>
<dbReference type="CDD" id="cd02570">
    <property type="entry name" value="PseudoU_synth_EcTruA"/>
    <property type="match status" value="1"/>
</dbReference>
<dbReference type="FunFam" id="3.30.70.580:FF:000001">
    <property type="entry name" value="tRNA pseudouridine synthase A"/>
    <property type="match status" value="1"/>
</dbReference>
<dbReference type="FunFam" id="3.30.70.660:FF:000001">
    <property type="entry name" value="tRNA pseudouridine synthase A"/>
    <property type="match status" value="1"/>
</dbReference>
<dbReference type="Gene3D" id="3.30.70.660">
    <property type="entry name" value="Pseudouridine synthase I, catalytic domain, C-terminal subdomain"/>
    <property type="match status" value="1"/>
</dbReference>
<dbReference type="Gene3D" id="3.30.70.580">
    <property type="entry name" value="Pseudouridine synthase I, catalytic domain, N-terminal subdomain"/>
    <property type="match status" value="1"/>
</dbReference>
<dbReference type="HAMAP" id="MF_00171">
    <property type="entry name" value="TruA"/>
    <property type="match status" value="1"/>
</dbReference>
<dbReference type="InterPro" id="IPR020103">
    <property type="entry name" value="PsdUridine_synth_cat_dom_sf"/>
</dbReference>
<dbReference type="InterPro" id="IPR001406">
    <property type="entry name" value="PsdUridine_synth_TruA"/>
</dbReference>
<dbReference type="InterPro" id="IPR020097">
    <property type="entry name" value="PsdUridine_synth_TruA_a/b_dom"/>
</dbReference>
<dbReference type="InterPro" id="IPR020095">
    <property type="entry name" value="PsdUridine_synth_TruA_C"/>
</dbReference>
<dbReference type="InterPro" id="IPR020094">
    <property type="entry name" value="TruA/RsuA/RluB/E/F_N"/>
</dbReference>
<dbReference type="NCBIfam" id="TIGR00071">
    <property type="entry name" value="hisT_truA"/>
    <property type="match status" value="1"/>
</dbReference>
<dbReference type="PANTHER" id="PTHR11142">
    <property type="entry name" value="PSEUDOURIDYLATE SYNTHASE"/>
    <property type="match status" value="1"/>
</dbReference>
<dbReference type="PANTHER" id="PTHR11142:SF0">
    <property type="entry name" value="TRNA PSEUDOURIDINE SYNTHASE-LIKE 1"/>
    <property type="match status" value="1"/>
</dbReference>
<dbReference type="Pfam" id="PF01416">
    <property type="entry name" value="PseudoU_synth_1"/>
    <property type="match status" value="2"/>
</dbReference>
<dbReference type="PIRSF" id="PIRSF001430">
    <property type="entry name" value="tRNA_psdUrid_synth"/>
    <property type="match status" value="1"/>
</dbReference>
<dbReference type="SUPFAM" id="SSF55120">
    <property type="entry name" value="Pseudouridine synthase"/>
    <property type="match status" value="1"/>
</dbReference>
<gene>
    <name evidence="1" type="primary">truA</name>
    <name type="ordered locus">PM0637</name>
</gene>